<protein>
    <recommendedName>
        <fullName>Sec translocon accessory complex subunit YajC</fullName>
    </recommendedName>
</protein>
<organism>
    <name type="scientific">Treponema pallidum (strain Nichols)</name>
    <dbReference type="NCBI Taxonomy" id="243276"/>
    <lineage>
        <taxon>Bacteria</taxon>
        <taxon>Pseudomonadati</taxon>
        <taxon>Spirochaetota</taxon>
        <taxon>Spirochaetia</taxon>
        <taxon>Spirochaetales</taxon>
        <taxon>Treponemataceae</taxon>
        <taxon>Treponema</taxon>
    </lineage>
</organism>
<accession>P58007</accession>
<sequence>MCPARSRMKTMPHRTLLQITTANGGWIPPLAIGVVCLIFYLFVFAPNLREQKRTQALIKNIKKGDPVVTIGGIHGVVSVVREHSLVIKVNEHGTLEVSRSAIARINDRRGVSNPKTDCDSKPGVPLTGVDKEIAR</sequence>
<comment type="function">
    <text evidence="1">The SecYEG-SecDF-YajC-YidC holo-translocon (HTL) protein secretase/insertase is a supercomplex required for protein secretion, insertion of proteins into membranes, and assembly of membrane protein complexes. While the SecYEG complex is essential for assembly of a number of proteins and complexes, the SecDF-YajC-YidC subcomplex facilitates these functions.</text>
</comment>
<comment type="subunit">
    <text evidence="1">Part of the SecDF-YidC-YajC translocase complex. The SecDF-YidC-YajC translocase forms a supercomplex with SecYEG, called the holo-translocon (HTL).</text>
</comment>
<comment type="subcellular location">
    <subcellularLocation>
        <location evidence="1">Cell inner membrane</location>
        <topology evidence="1">Single-pass membrane protein</topology>
    </subcellularLocation>
</comment>
<comment type="similarity">
    <text evidence="4">Belongs to the YajC family.</text>
</comment>
<feature type="chain" id="PRO_0000097036" description="Sec translocon accessory complex subunit YajC">
    <location>
        <begin position="1"/>
        <end position="135"/>
    </location>
</feature>
<feature type="transmembrane region" description="Helical" evidence="2">
    <location>
        <begin position="25"/>
        <end position="45"/>
    </location>
</feature>
<feature type="region of interest" description="Disordered" evidence="3">
    <location>
        <begin position="108"/>
        <end position="135"/>
    </location>
</feature>
<feature type="compositionally biased region" description="Basic and acidic residues" evidence="3">
    <location>
        <begin position="108"/>
        <end position="120"/>
    </location>
</feature>
<dbReference type="EMBL" id="AE000520">
    <property type="status" value="NOT_ANNOTATED_CDS"/>
    <property type="molecule type" value="Genomic_DNA"/>
</dbReference>
<dbReference type="eggNOG" id="COG1862">
    <property type="taxonomic scope" value="Bacteria"/>
</dbReference>
<dbReference type="Proteomes" id="UP000000811">
    <property type="component" value="Chromosome"/>
</dbReference>
<dbReference type="GO" id="GO:0005886">
    <property type="term" value="C:plasma membrane"/>
    <property type="evidence" value="ECO:0007669"/>
    <property type="project" value="UniProtKB-SubCell"/>
</dbReference>
<dbReference type="GO" id="GO:0015031">
    <property type="term" value="P:protein transport"/>
    <property type="evidence" value="ECO:0007669"/>
    <property type="project" value="UniProtKB-KW"/>
</dbReference>
<dbReference type="InterPro" id="IPR003849">
    <property type="entry name" value="Preprotein_translocase_YajC"/>
</dbReference>
<dbReference type="NCBIfam" id="TIGR00739">
    <property type="entry name" value="yajC"/>
    <property type="match status" value="1"/>
</dbReference>
<dbReference type="PANTHER" id="PTHR33909">
    <property type="entry name" value="SEC TRANSLOCON ACCESSORY COMPLEX SUBUNIT YAJC"/>
    <property type="match status" value="1"/>
</dbReference>
<dbReference type="PANTHER" id="PTHR33909:SF1">
    <property type="entry name" value="SEC TRANSLOCON ACCESSORY COMPLEX SUBUNIT YAJC"/>
    <property type="match status" value="1"/>
</dbReference>
<dbReference type="Pfam" id="PF02699">
    <property type="entry name" value="YajC"/>
    <property type="match status" value="1"/>
</dbReference>
<dbReference type="PRINTS" id="PR01853">
    <property type="entry name" value="YAJCTRNLCASE"/>
</dbReference>
<dbReference type="SMART" id="SM01323">
    <property type="entry name" value="YajC"/>
    <property type="match status" value="1"/>
</dbReference>
<evidence type="ECO:0000250" key="1">
    <source>
        <dbReference type="UniProtKB" id="P0ADZ7"/>
    </source>
</evidence>
<evidence type="ECO:0000255" key="2"/>
<evidence type="ECO:0000256" key="3">
    <source>
        <dbReference type="SAM" id="MobiDB-lite"/>
    </source>
</evidence>
<evidence type="ECO:0000305" key="4"/>
<reference key="1">
    <citation type="journal article" date="1998" name="Science">
        <title>Complete genome sequence of Treponema pallidum, the syphilis spirochete.</title>
        <authorList>
            <person name="Fraser C.M."/>
            <person name="Norris S.J."/>
            <person name="Weinstock G.M."/>
            <person name="White O."/>
            <person name="Sutton G.G."/>
            <person name="Dodson R.J."/>
            <person name="Gwinn M.L."/>
            <person name="Hickey E.K."/>
            <person name="Clayton R.A."/>
            <person name="Ketchum K.A."/>
            <person name="Sodergren E."/>
            <person name="Hardham J.M."/>
            <person name="McLeod M.P."/>
            <person name="Salzberg S.L."/>
            <person name="Peterson J.D."/>
            <person name="Khalak H.G."/>
            <person name="Richardson D.L."/>
            <person name="Howell J.K."/>
            <person name="Chidambaram M."/>
            <person name="Utterback T.R."/>
            <person name="McDonald L.A."/>
            <person name="Artiach P."/>
            <person name="Bowman C."/>
            <person name="Cotton M.D."/>
            <person name="Fujii C."/>
            <person name="Garland S.A."/>
            <person name="Hatch B."/>
            <person name="Horst K."/>
            <person name="Roberts K.M."/>
            <person name="Sandusky M."/>
            <person name="Weidman J.F."/>
            <person name="Smith H.O."/>
            <person name="Venter J.C."/>
        </authorList>
    </citation>
    <scope>NUCLEOTIDE SEQUENCE [LARGE SCALE GENOMIC DNA]</scope>
    <source>
        <strain>Nichols</strain>
    </source>
</reference>
<reference key="2">
    <citation type="unpublished observations" date="2001-04">
        <authorList>
            <person name="Medigue C."/>
            <person name="Bocs S."/>
        </authorList>
    </citation>
    <scope>IDENTIFICATION</scope>
</reference>
<name>YAJC_TREPA</name>
<proteinExistence type="inferred from homology"/>
<gene>
    <name type="primary">yajC</name>
    <name type="ordered locus">TP_0409.1</name>
</gene>
<keyword id="KW-0997">Cell inner membrane</keyword>
<keyword id="KW-1003">Cell membrane</keyword>
<keyword id="KW-0472">Membrane</keyword>
<keyword id="KW-0653">Protein transport</keyword>
<keyword id="KW-1185">Reference proteome</keyword>
<keyword id="KW-0811">Translocation</keyword>
<keyword id="KW-0812">Transmembrane</keyword>
<keyword id="KW-1133">Transmembrane helix</keyword>
<keyword id="KW-0813">Transport</keyword>